<protein>
    <recommendedName>
        <fullName evidence="1">dITP/XTP pyrophosphatase</fullName>
        <ecNumber evidence="1">3.6.1.66</ecNumber>
    </recommendedName>
    <alternativeName>
        <fullName evidence="1">Non-canonical purine NTP pyrophosphatase</fullName>
    </alternativeName>
    <alternativeName>
        <fullName evidence="1">Non-standard purine NTP pyrophosphatase</fullName>
    </alternativeName>
    <alternativeName>
        <fullName evidence="1">Nucleoside-triphosphate diphosphatase</fullName>
    </alternativeName>
    <alternativeName>
        <fullName evidence="1">Nucleoside-triphosphate pyrophosphatase</fullName>
        <shortName evidence="1">NTPase</shortName>
    </alternativeName>
</protein>
<organism>
    <name type="scientific">Exiguobacterium sibiricum (strain DSM 17290 / CCUG 55495 / CIP 109462 / JCM 13490 / 255-15)</name>
    <dbReference type="NCBI Taxonomy" id="262543"/>
    <lineage>
        <taxon>Bacteria</taxon>
        <taxon>Bacillati</taxon>
        <taxon>Bacillota</taxon>
        <taxon>Bacilli</taxon>
        <taxon>Bacillales</taxon>
        <taxon>Bacillales Family XII. Incertae Sedis</taxon>
        <taxon>Exiguobacterium</taxon>
    </lineage>
</organism>
<proteinExistence type="inferred from homology"/>
<evidence type="ECO:0000255" key="1">
    <source>
        <dbReference type="HAMAP-Rule" id="MF_01405"/>
    </source>
</evidence>
<comment type="function">
    <text evidence="1">Pyrophosphatase that catalyzes the hydrolysis of nucleoside triphosphates to their monophosphate derivatives, with a high preference for the non-canonical purine nucleotides XTP (xanthosine triphosphate), dITP (deoxyinosine triphosphate) and ITP. Seems to function as a house-cleaning enzyme that removes non-canonical purine nucleotides from the nucleotide pool, thus preventing their incorporation into DNA/RNA and avoiding chromosomal lesions.</text>
</comment>
<comment type="catalytic activity">
    <reaction evidence="1">
        <text>XTP + H2O = XMP + diphosphate + H(+)</text>
        <dbReference type="Rhea" id="RHEA:28610"/>
        <dbReference type="ChEBI" id="CHEBI:15377"/>
        <dbReference type="ChEBI" id="CHEBI:15378"/>
        <dbReference type="ChEBI" id="CHEBI:33019"/>
        <dbReference type="ChEBI" id="CHEBI:57464"/>
        <dbReference type="ChEBI" id="CHEBI:61314"/>
        <dbReference type="EC" id="3.6.1.66"/>
    </reaction>
</comment>
<comment type="catalytic activity">
    <reaction evidence="1">
        <text>dITP + H2O = dIMP + diphosphate + H(+)</text>
        <dbReference type="Rhea" id="RHEA:28342"/>
        <dbReference type="ChEBI" id="CHEBI:15377"/>
        <dbReference type="ChEBI" id="CHEBI:15378"/>
        <dbReference type="ChEBI" id="CHEBI:33019"/>
        <dbReference type="ChEBI" id="CHEBI:61194"/>
        <dbReference type="ChEBI" id="CHEBI:61382"/>
        <dbReference type="EC" id="3.6.1.66"/>
    </reaction>
</comment>
<comment type="catalytic activity">
    <reaction evidence="1">
        <text>ITP + H2O = IMP + diphosphate + H(+)</text>
        <dbReference type="Rhea" id="RHEA:29399"/>
        <dbReference type="ChEBI" id="CHEBI:15377"/>
        <dbReference type="ChEBI" id="CHEBI:15378"/>
        <dbReference type="ChEBI" id="CHEBI:33019"/>
        <dbReference type="ChEBI" id="CHEBI:58053"/>
        <dbReference type="ChEBI" id="CHEBI:61402"/>
        <dbReference type="EC" id="3.6.1.66"/>
    </reaction>
</comment>
<comment type="cofactor">
    <cofactor evidence="1">
        <name>Mg(2+)</name>
        <dbReference type="ChEBI" id="CHEBI:18420"/>
    </cofactor>
    <text evidence="1">Binds 1 Mg(2+) ion per subunit.</text>
</comment>
<comment type="subunit">
    <text evidence="1">Homodimer.</text>
</comment>
<comment type="similarity">
    <text evidence="1">Belongs to the HAM1 NTPase family.</text>
</comment>
<feature type="chain" id="PRO_1000145490" description="dITP/XTP pyrophosphatase">
    <location>
        <begin position="1"/>
        <end position="198"/>
    </location>
</feature>
<feature type="active site" description="Proton acceptor" evidence="1">
    <location>
        <position position="69"/>
    </location>
</feature>
<feature type="binding site" evidence="1">
    <location>
        <begin position="7"/>
        <end position="12"/>
    </location>
    <ligand>
        <name>substrate</name>
    </ligand>
</feature>
<feature type="binding site" evidence="1">
    <location>
        <position position="40"/>
    </location>
    <ligand>
        <name>Mg(2+)</name>
        <dbReference type="ChEBI" id="CHEBI:18420"/>
    </ligand>
</feature>
<feature type="binding site" evidence="1">
    <location>
        <position position="69"/>
    </location>
    <ligand>
        <name>Mg(2+)</name>
        <dbReference type="ChEBI" id="CHEBI:18420"/>
    </ligand>
</feature>
<feature type="binding site" evidence="1">
    <location>
        <position position="70"/>
    </location>
    <ligand>
        <name>substrate</name>
    </ligand>
</feature>
<feature type="binding site" evidence="1">
    <location>
        <begin position="152"/>
        <end position="155"/>
    </location>
    <ligand>
        <name>substrate</name>
    </ligand>
</feature>
<feature type="binding site" evidence="1">
    <location>
        <position position="175"/>
    </location>
    <ligand>
        <name>substrate</name>
    </ligand>
</feature>
<feature type="binding site" evidence="1">
    <location>
        <begin position="180"/>
        <end position="181"/>
    </location>
    <ligand>
        <name>substrate</name>
    </ligand>
</feature>
<name>IXTPA_EXIS2</name>
<accession>B1YJW5</accession>
<keyword id="KW-0378">Hydrolase</keyword>
<keyword id="KW-0460">Magnesium</keyword>
<keyword id="KW-0479">Metal-binding</keyword>
<keyword id="KW-0546">Nucleotide metabolism</keyword>
<keyword id="KW-0547">Nucleotide-binding</keyword>
<keyword id="KW-1185">Reference proteome</keyword>
<sequence>MKIIVATRNAGKVGEFQAMLGRLGYDVESLLDYDTAPETEETGSTFEENAELKSKEAAAYFGHAVLSDDSGLEVDALDGAPGVYSARFAGEDKSDAANNALLLEKLADTPADRRTARFVCALSLAKPSGETLTVRGTMEGQIGFEQKGTNGFGYDPLFLIPSLNQTAAELTKSEKAAISHRGQALKKLEAALTTFLGE</sequence>
<reference key="1">
    <citation type="submission" date="2008-04" db="EMBL/GenBank/DDBJ databases">
        <title>Complete sequence of chromosome of Exiguobacterium sibiricum 255-15.</title>
        <authorList>
            <consortium name="US DOE Joint Genome Institute"/>
            <person name="Copeland A."/>
            <person name="Lucas S."/>
            <person name="Lapidus A."/>
            <person name="Glavina del Rio T."/>
            <person name="Dalin E."/>
            <person name="Tice H."/>
            <person name="Bruce D."/>
            <person name="Goodwin L."/>
            <person name="Pitluck S."/>
            <person name="Kiss H."/>
            <person name="Chertkov O."/>
            <person name="Monk C."/>
            <person name="Brettin T."/>
            <person name="Detter J.C."/>
            <person name="Han C."/>
            <person name="Kuske C.R."/>
            <person name="Schmutz J."/>
            <person name="Larimer F."/>
            <person name="Land M."/>
            <person name="Hauser L."/>
            <person name="Kyrpides N."/>
            <person name="Mikhailova N."/>
            <person name="Vishnivetskaya T."/>
            <person name="Rodrigues D.F."/>
            <person name="Gilichinsky D."/>
            <person name="Tiedje J."/>
            <person name="Richardson P."/>
        </authorList>
    </citation>
    <scope>NUCLEOTIDE SEQUENCE [LARGE SCALE GENOMIC DNA]</scope>
    <source>
        <strain>DSM 17290 / CCUG 55495 / CIP 109462 / JCM 13490 / 255-15</strain>
    </source>
</reference>
<dbReference type="EC" id="3.6.1.66" evidence="1"/>
<dbReference type="EMBL" id="CP001022">
    <property type="protein sequence ID" value="ACB61603.1"/>
    <property type="molecule type" value="Genomic_DNA"/>
</dbReference>
<dbReference type="RefSeq" id="WP_012371020.1">
    <property type="nucleotide sequence ID" value="NC_010556.1"/>
</dbReference>
<dbReference type="SMR" id="B1YJW5"/>
<dbReference type="STRING" id="262543.Exig_2151"/>
<dbReference type="KEGG" id="esi:Exig_2151"/>
<dbReference type="eggNOG" id="COG0127">
    <property type="taxonomic scope" value="Bacteria"/>
</dbReference>
<dbReference type="HOGENOM" id="CLU_082080_0_2_9"/>
<dbReference type="OrthoDB" id="9807456at2"/>
<dbReference type="Proteomes" id="UP000001681">
    <property type="component" value="Chromosome"/>
</dbReference>
<dbReference type="GO" id="GO:0005829">
    <property type="term" value="C:cytosol"/>
    <property type="evidence" value="ECO:0007669"/>
    <property type="project" value="TreeGrafter"/>
</dbReference>
<dbReference type="GO" id="GO:0035870">
    <property type="term" value="F:dITP diphosphatase activity"/>
    <property type="evidence" value="ECO:0007669"/>
    <property type="project" value="RHEA"/>
</dbReference>
<dbReference type="GO" id="GO:0036220">
    <property type="term" value="F:ITP diphosphatase activity"/>
    <property type="evidence" value="ECO:0007669"/>
    <property type="project" value="UniProtKB-EC"/>
</dbReference>
<dbReference type="GO" id="GO:0046872">
    <property type="term" value="F:metal ion binding"/>
    <property type="evidence" value="ECO:0007669"/>
    <property type="project" value="UniProtKB-KW"/>
</dbReference>
<dbReference type="GO" id="GO:0000166">
    <property type="term" value="F:nucleotide binding"/>
    <property type="evidence" value="ECO:0007669"/>
    <property type="project" value="UniProtKB-KW"/>
</dbReference>
<dbReference type="GO" id="GO:0017111">
    <property type="term" value="F:ribonucleoside triphosphate phosphatase activity"/>
    <property type="evidence" value="ECO:0007669"/>
    <property type="project" value="InterPro"/>
</dbReference>
<dbReference type="GO" id="GO:0036222">
    <property type="term" value="F:XTP diphosphatase activity"/>
    <property type="evidence" value="ECO:0007669"/>
    <property type="project" value="RHEA"/>
</dbReference>
<dbReference type="GO" id="GO:0009117">
    <property type="term" value="P:nucleotide metabolic process"/>
    <property type="evidence" value="ECO:0007669"/>
    <property type="project" value="UniProtKB-KW"/>
</dbReference>
<dbReference type="GO" id="GO:0009146">
    <property type="term" value="P:purine nucleoside triphosphate catabolic process"/>
    <property type="evidence" value="ECO:0007669"/>
    <property type="project" value="UniProtKB-UniRule"/>
</dbReference>
<dbReference type="CDD" id="cd00515">
    <property type="entry name" value="HAM1"/>
    <property type="match status" value="1"/>
</dbReference>
<dbReference type="FunFam" id="3.90.950.10:FF:000001">
    <property type="entry name" value="dITP/XTP pyrophosphatase"/>
    <property type="match status" value="1"/>
</dbReference>
<dbReference type="Gene3D" id="3.90.950.10">
    <property type="match status" value="1"/>
</dbReference>
<dbReference type="HAMAP" id="MF_01405">
    <property type="entry name" value="Non_canon_purine_NTPase"/>
    <property type="match status" value="1"/>
</dbReference>
<dbReference type="InterPro" id="IPR020922">
    <property type="entry name" value="dITP/XTP_pyrophosphatase"/>
</dbReference>
<dbReference type="InterPro" id="IPR029001">
    <property type="entry name" value="ITPase-like_fam"/>
</dbReference>
<dbReference type="InterPro" id="IPR002637">
    <property type="entry name" value="RdgB/HAM1"/>
</dbReference>
<dbReference type="NCBIfam" id="NF011397">
    <property type="entry name" value="PRK14822.1"/>
    <property type="match status" value="1"/>
</dbReference>
<dbReference type="NCBIfam" id="TIGR00042">
    <property type="entry name" value="RdgB/HAM1 family non-canonical purine NTP pyrophosphatase"/>
    <property type="match status" value="1"/>
</dbReference>
<dbReference type="PANTHER" id="PTHR11067:SF9">
    <property type="entry name" value="INOSINE TRIPHOSPHATE PYROPHOSPHATASE"/>
    <property type="match status" value="1"/>
</dbReference>
<dbReference type="PANTHER" id="PTHR11067">
    <property type="entry name" value="INOSINE TRIPHOSPHATE PYROPHOSPHATASE/HAM1 PROTEIN"/>
    <property type="match status" value="1"/>
</dbReference>
<dbReference type="Pfam" id="PF01725">
    <property type="entry name" value="Ham1p_like"/>
    <property type="match status" value="1"/>
</dbReference>
<dbReference type="SUPFAM" id="SSF52972">
    <property type="entry name" value="ITPase-like"/>
    <property type="match status" value="1"/>
</dbReference>
<gene>
    <name type="ordered locus">Exig_2151</name>
</gene>